<sequence length="305" mass="34384">MKNTQTSAPIDHMISLGDNRHIRVWETLPKNQEIKRNNTIVIAAGFARRMDHFAGLAEYLANNGFHVIRYDSLNHVGLSSGEINQFSMSVGKHSLLTVIEWLKGRGIDQIGLIASSLSARIAYDVAAEINLSFLITAVGVVNLRSTLEKALKYDYLQMEINDIPEDLDFEGYNLGSKVFVTDCFDNNWDSLDSTINKTKDLDIPFIAFISNGDDWVCQQEVKKLVGNMNSDKTKIYSLIGSSHDLGENLIVLRNFYQSVTRAAIRVDSEVIDLVDDISEPNFEDLTIITVNERRLKNKIAKRNVR</sequence>
<organism>
    <name type="scientific">Photobacterium leiognathi</name>
    <dbReference type="NCBI Taxonomy" id="553611"/>
    <lineage>
        <taxon>Bacteria</taxon>
        <taxon>Pseudomonadati</taxon>
        <taxon>Pseudomonadota</taxon>
        <taxon>Gammaproteobacteria</taxon>
        <taxon>Vibrionales</taxon>
        <taxon>Vibrionaceae</taxon>
        <taxon>Photobacterium</taxon>
    </lineage>
</organism>
<keyword id="KW-0012">Acyltransferase</keyword>
<keyword id="KW-0455">Luminescence</keyword>
<keyword id="KW-0808">Transferase</keyword>
<accession>Q06878</accession>
<reference key="1">
    <citation type="journal article" date="1993" name="Gene">
        <title>Sequence of the luxD gene encoding acyltransferase of the lux operon from Photobacterium leiognathi.</title>
        <authorList>
            <person name="Chao Y.-F."/>
            <person name="Weng S.-F."/>
            <person name="Lin J.-W."/>
        </authorList>
    </citation>
    <scope>NUCLEOTIDE SEQUENCE [GENOMIC DNA]</scope>
    <source>
        <strain>741</strain>
    </source>
</reference>
<comment type="function">
    <text evidence="1">Acyl transferase is part of the fatty acid reductase system required for aldehyde biosynthesis; it produces fatty acids for the luminescent reaction.</text>
</comment>
<comment type="pathway">
    <text evidence="1">Lipid metabolism; fatty acid reduction for biolumincescence.</text>
</comment>
<comment type="similarity">
    <text evidence="1">Belongs to the LuxD family.</text>
</comment>
<evidence type="ECO:0000255" key="1">
    <source>
        <dbReference type="HAMAP-Rule" id="MF_00774"/>
    </source>
</evidence>
<gene>
    <name evidence="1" type="primary">luxD</name>
</gene>
<name>LUXD2_PHOLE</name>
<proteinExistence type="inferred from homology"/>
<feature type="chain" id="PRO_0000220188" description="Acyl transferase">
    <location>
        <begin position="1"/>
        <end position="305"/>
    </location>
</feature>
<feature type="active site" description="Charge relay system" evidence="1">
    <location>
        <position position="116"/>
    </location>
</feature>
<feature type="active site" description="Charge relay system" evidence="1">
    <location>
        <position position="213"/>
    </location>
</feature>
<feature type="active site" description="Charge relay system" evidence="1">
    <location>
        <position position="243"/>
    </location>
</feature>
<dbReference type="EC" id="2.3.1.-" evidence="1"/>
<dbReference type="EMBL" id="X65612">
    <property type="protein sequence ID" value="CAA46563.1"/>
    <property type="molecule type" value="Genomic_DNA"/>
</dbReference>
<dbReference type="PIR" id="JN0518">
    <property type="entry name" value="JN0518"/>
</dbReference>
<dbReference type="SMR" id="Q06878"/>
<dbReference type="STRING" id="553611.GCA_001557755_01582"/>
<dbReference type="ESTHER" id="phole-lxd2">
    <property type="family name" value="Thioesterase_acyl-transferase"/>
</dbReference>
<dbReference type="UniPathway" id="UPA00569"/>
<dbReference type="GO" id="GO:0016747">
    <property type="term" value="F:acyltransferase activity, transferring groups other than amino-acyl groups"/>
    <property type="evidence" value="ECO:0007669"/>
    <property type="project" value="UniProtKB-UniRule"/>
</dbReference>
<dbReference type="GO" id="GO:0008218">
    <property type="term" value="P:bioluminescence"/>
    <property type="evidence" value="ECO:0007669"/>
    <property type="project" value="UniProtKB-UniRule"/>
</dbReference>
<dbReference type="GO" id="GO:0006631">
    <property type="term" value="P:fatty acid metabolic process"/>
    <property type="evidence" value="ECO:0007669"/>
    <property type="project" value="InterPro"/>
</dbReference>
<dbReference type="Gene3D" id="3.40.50.1820">
    <property type="entry name" value="alpha/beta hydrolase"/>
    <property type="match status" value="1"/>
</dbReference>
<dbReference type="HAMAP" id="MF_00774">
    <property type="entry name" value="LuxD"/>
    <property type="match status" value="1"/>
</dbReference>
<dbReference type="InterPro" id="IPR029058">
    <property type="entry name" value="AB_hydrolase_fold"/>
</dbReference>
<dbReference type="InterPro" id="IPR003157">
    <property type="entry name" value="LuxD"/>
</dbReference>
<dbReference type="Pfam" id="PF02273">
    <property type="entry name" value="Acyl_transf_2"/>
    <property type="match status" value="1"/>
</dbReference>
<dbReference type="PIRSF" id="PIRSF009416">
    <property type="entry name" value="LuxD"/>
    <property type="match status" value="1"/>
</dbReference>
<dbReference type="SUPFAM" id="SSF53474">
    <property type="entry name" value="alpha/beta-Hydrolases"/>
    <property type="match status" value="1"/>
</dbReference>
<protein>
    <recommendedName>
        <fullName evidence="1">Acyl transferase</fullName>
        <shortName evidence="1">ACT</shortName>
        <ecNumber evidence="1">2.3.1.-</ecNumber>
    </recommendedName>
    <alternativeName>
        <fullName evidence="1">C14ACP-TE</fullName>
    </alternativeName>
    <alternativeName>
        <fullName evidence="1">Myristoyl-ACP-specific thioesterase</fullName>
    </alternativeName>
</protein>